<organism>
    <name type="scientific">Shigella sonnei (strain Ss046)</name>
    <dbReference type="NCBI Taxonomy" id="300269"/>
    <lineage>
        <taxon>Bacteria</taxon>
        <taxon>Pseudomonadati</taxon>
        <taxon>Pseudomonadota</taxon>
        <taxon>Gammaproteobacteria</taxon>
        <taxon>Enterobacterales</taxon>
        <taxon>Enterobacteriaceae</taxon>
        <taxon>Shigella</taxon>
    </lineage>
</organism>
<keyword id="KW-0004">4Fe-4S</keyword>
<keyword id="KW-0997">Cell inner membrane</keyword>
<keyword id="KW-1003">Cell membrane</keyword>
<keyword id="KW-0249">Electron transport</keyword>
<keyword id="KW-0408">Iron</keyword>
<keyword id="KW-0411">Iron-sulfur</keyword>
<keyword id="KW-0472">Membrane</keyword>
<keyword id="KW-0479">Metal-binding</keyword>
<keyword id="KW-1185">Reference proteome</keyword>
<keyword id="KW-0677">Repeat</keyword>
<keyword id="KW-1278">Translocase</keyword>
<keyword id="KW-0813">Transport</keyword>
<dbReference type="EC" id="7.-.-.-" evidence="1"/>
<dbReference type="EMBL" id="CP000038">
    <property type="protein sequence ID" value="AAZ88229.1"/>
    <property type="molecule type" value="Genomic_DNA"/>
</dbReference>
<dbReference type="RefSeq" id="WP_000991809.1">
    <property type="nucleotide sequence ID" value="NC_007384.1"/>
</dbReference>
<dbReference type="GeneID" id="93775780"/>
<dbReference type="KEGG" id="ssn:SSON_1530"/>
<dbReference type="HOGENOM" id="CLU_063448_2_0_6"/>
<dbReference type="Proteomes" id="UP000002529">
    <property type="component" value="Chromosome"/>
</dbReference>
<dbReference type="GO" id="GO:0005886">
    <property type="term" value="C:plasma membrane"/>
    <property type="evidence" value="ECO:0007669"/>
    <property type="project" value="UniProtKB-SubCell"/>
</dbReference>
<dbReference type="GO" id="GO:0051539">
    <property type="term" value="F:4 iron, 4 sulfur cluster binding"/>
    <property type="evidence" value="ECO:0007669"/>
    <property type="project" value="UniProtKB-UniRule"/>
</dbReference>
<dbReference type="GO" id="GO:0009055">
    <property type="term" value="F:electron transfer activity"/>
    <property type="evidence" value="ECO:0007669"/>
    <property type="project" value="InterPro"/>
</dbReference>
<dbReference type="GO" id="GO:0046872">
    <property type="term" value="F:metal ion binding"/>
    <property type="evidence" value="ECO:0007669"/>
    <property type="project" value="UniProtKB-KW"/>
</dbReference>
<dbReference type="GO" id="GO:0022900">
    <property type="term" value="P:electron transport chain"/>
    <property type="evidence" value="ECO:0007669"/>
    <property type="project" value="UniProtKB-UniRule"/>
</dbReference>
<dbReference type="FunFam" id="1.10.15.40:FF:000001">
    <property type="entry name" value="Ion-translocating oxidoreductase complex subunit B"/>
    <property type="match status" value="1"/>
</dbReference>
<dbReference type="Gene3D" id="3.30.70.20">
    <property type="match status" value="1"/>
</dbReference>
<dbReference type="Gene3D" id="1.10.15.40">
    <property type="entry name" value="Electron transport complex subunit B, putative Fe-S cluster"/>
    <property type="match status" value="1"/>
</dbReference>
<dbReference type="HAMAP" id="MF_00463">
    <property type="entry name" value="RsxB_RnfB"/>
    <property type="match status" value="1"/>
</dbReference>
<dbReference type="InterPro" id="IPR007202">
    <property type="entry name" value="4Fe-4S_dom"/>
</dbReference>
<dbReference type="InterPro" id="IPR017896">
    <property type="entry name" value="4Fe4S_Fe-S-bd"/>
</dbReference>
<dbReference type="InterPro" id="IPR017900">
    <property type="entry name" value="4Fe4S_Fe_S_CS"/>
</dbReference>
<dbReference type="InterPro" id="IPR050395">
    <property type="entry name" value="4Fe4S_Ferredoxin_RnfB"/>
</dbReference>
<dbReference type="InterPro" id="IPR010207">
    <property type="entry name" value="Elect_transpt_cplx_RnfB/RsxB"/>
</dbReference>
<dbReference type="InterPro" id="IPR016463">
    <property type="entry name" value="RnfB/RsxB_Proteobac"/>
</dbReference>
<dbReference type="NCBIfam" id="NF003475">
    <property type="entry name" value="PRK05113.1"/>
    <property type="match status" value="1"/>
</dbReference>
<dbReference type="NCBIfam" id="TIGR01944">
    <property type="entry name" value="rnfB"/>
    <property type="match status" value="1"/>
</dbReference>
<dbReference type="PANTHER" id="PTHR43560">
    <property type="entry name" value="ION-TRANSLOCATING OXIDOREDUCTASE COMPLEX SUBUNIT B"/>
    <property type="match status" value="1"/>
</dbReference>
<dbReference type="PANTHER" id="PTHR43560:SF1">
    <property type="entry name" value="ION-TRANSLOCATING OXIDOREDUCTASE COMPLEX SUBUNIT B"/>
    <property type="match status" value="1"/>
</dbReference>
<dbReference type="Pfam" id="PF14697">
    <property type="entry name" value="Fer4_21"/>
    <property type="match status" value="1"/>
</dbReference>
<dbReference type="Pfam" id="PF04060">
    <property type="entry name" value="FeS"/>
    <property type="match status" value="1"/>
</dbReference>
<dbReference type="PIRSF" id="PIRSF005784">
    <property type="entry name" value="Elect_transpt_RnfB"/>
    <property type="match status" value="1"/>
</dbReference>
<dbReference type="SUPFAM" id="SSF54862">
    <property type="entry name" value="4Fe-4S ferredoxins"/>
    <property type="match status" value="1"/>
</dbReference>
<dbReference type="PROSITE" id="PS51656">
    <property type="entry name" value="4FE4S"/>
    <property type="match status" value="1"/>
</dbReference>
<dbReference type="PROSITE" id="PS00198">
    <property type="entry name" value="4FE4S_FER_1"/>
    <property type="match status" value="2"/>
</dbReference>
<dbReference type="PROSITE" id="PS51379">
    <property type="entry name" value="4FE4S_FER_2"/>
    <property type="match status" value="2"/>
</dbReference>
<reference key="1">
    <citation type="journal article" date="2005" name="Nucleic Acids Res.">
        <title>Genome dynamics and diversity of Shigella species, the etiologic agents of bacillary dysentery.</title>
        <authorList>
            <person name="Yang F."/>
            <person name="Yang J."/>
            <person name="Zhang X."/>
            <person name="Chen L."/>
            <person name="Jiang Y."/>
            <person name="Yan Y."/>
            <person name="Tang X."/>
            <person name="Wang J."/>
            <person name="Xiong Z."/>
            <person name="Dong J."/>
            <person name="Xue Y."/>
            <person name="Zhu Y."/>
            <person name="Xu X."/>
            <person name="Sun L."/>
            <person name="Chen S."/>
            <person name="Nie H."/>
            <person name="Peng J."/>
            <person name="Xu J."/>
            <person name="Wang Y."/>
            <person name="Yuan Z."/>
            <person name="Wen Y."/>
            <person name="Yao Z."/>
            <person name="Shen Y."/>
            <person name="Qiang B."/>
            <person name="Hou Y."/>
            <person name="Yu J."/>
            <person name="Jin Q."/>
        </authorList>
    </citation>
    <scope>NUCLEOTIDE SEQUENCE [LARGE SCALE GENOMIC DNA]</scope>
    <source>
        <strain>Ss046</strain>
    </source>
</reference>
<feature type="chain" id="PRO_1000013661" description="Ion-translocating oxidoreductase complex subunit B">
    <location>
        <begin position="1"/>
        <end position="192"/>
    </location>
</feature>
<feature type="domain" description="4Fe-4S" evidence="1">
    <location>
        <begin position="32"/>
        <end position="91"/>
    </location>
</feature>
<feature type="domain" description="4Fe-4S ferredoxin-type 1" evidence="1">
    <location>
        <begin position="108"/>
        <end position="137"/>
    </location>
</feature>
<feature type="domain" description="4Fe-4S ferredoxin-type 2" evidence="1">
    <location>
        <begin position="138"/>
        <end position="167"/>
    </location>
</feature>
<feature type="region of interest" description="Hydrophobic" evidence="1">
    <location>
        <begin position="1"/>
        <end position="26"/>
    </location>
</feature>
<feature type="binding site" evidence="1">
    <location>
        <position position="49"/>
    </location>
    <ligand>
        <name>[4Fe-4S] cluster</name>
        <dbReference type="ChEBI" id="CHEBI:49883"/>
        <label>1</label>
    </ligand>
</feature>
<feature type="binding site" evidence="1">
    <location>
        <position position="52"/>
    </location>
    <ligand>
        <name>[4Fe-4S] cluster</name>
        <dbReference type="ChEBI" id="CHEBI:49883"/>
        <label>1</label>
    </ligand>
</feature>
<feature type="binding site" evidence="1">
    <location>
        <position position="57"/>
    </location>
    <ligand>
        <name>[4Fe-4S] cluster</name>
        <dbReference type="ChEBI" id="CHEBI:49883"/>
        <label>1</label>
    </ligand>
</feature>
<feature type="binding site" evidence="1">
    <location>
        <position position="74"/>
    </location>
    <ligand>
        <name>[4Fe-4S] cluster</name>
        <dbReference type="ChEBI" id="CHEBI:49883"/>
        <label>1</label>
    </ligand>
</feature>
<feature type="binding site" evidence="1">
    <location>
        <position position="117"/>
    </location>
    <ligand>
        <name>[4Fe-4S] cluster</name>
        <dbReference type="ChEBI" id="CHEBI:49883"/>
        <label>2</label>
    </ligand>
</feature>
<feature type="binding site" evidence="1">
    <location>
        <position position="120"/>
    </location>
    <ligand>
        <name>[4Fe-4S] cluster</name>
        <dbReference type="ChEBI" id="CHEBI:49883"/>
        <label>2</label>
    </ligand>
</feature>
<feature type="binding site" evidence="1">
    <location>
        <position position="123"/>
    </location>
    <ligand>
        <name>[4Fe-4S] cluster</name>
        <dbReference type="ChEBI" id="CHEBI:49883"/>
        <label>2</label>
    </ligand>
</feature>
<feature type="binding site" evidence="1">
    <location>
        <position position="127"/>
    </location>
    <ligand>
        <name>[4Fe-4S] cluster</name>
        <dbReference type="ChEBI" id="CHEBI:49883"/>
        <label>3</label>
    </ligand>
</feature>
<feature type="binding site" evidence="1">
    <location>
        <position position="147"/>
    </location>
    <ligand>
        <name>[4Fe-4S] cluster</name>
        <dbReference type="ChEBI" id="CHEBI:49883"/>
        <label>3</label>
    </ligand>
</feature>
<feature type="binding site" evidence="1">
    <location>
        <position position="150"/>
    </location>
    <ligand>
        <name>[4Fe-4S] cluster</name>
        <dbReference type="ChEBI" id="CHEBI:49883"/>
        <label>3</label>
    </ligand>
</feature>
<feature type="binding site" evidence="1">
    <location>
        <position position="153"/>
    </location>
    <ligand>
        <name>[4Fe-4S] cluster</name>
        <dbReference type="ChEBI" id="CHEBI:49883"/>
        <label>3</label>
    </ligand>
</feature>
<feature type="binding site" evidence="1">
    <location>
        <position position="157"/>
    </location>
    <ligand>
        <name>[4Fe-4S] cluster</name>
        <dbReference type="ChEBI" id="CHEBI:49883"/>
        <label>2</label>
    </ligand>
</feature>
<sequence>MNAIWIAVAAVSLLGLAFGAILGYASRRFAVEDDPVVEKIDEILPQSQCGQCGYPGCRPYAEAISCNGEKINRCAPGGEAVMLKIAELLNVEPQPLDGEAQELTPARMVAVIDENNCIGCTKCIQACPVDAIVGATRAMHTVMSDLCTGCNLCVDPCPTHCISLQPVAETPDSWKWDLNTIPVRIIPVEHHA</sequence>
<gene>
    <name evidence="1" type="primary">rsxB</name>
    <name type="ordered locus">SSON_1530</name>
</gene>
<proteinExistence type="inferred from homology"/>
<evidence type="ECO:0000255" key="1">
    <source>
        <dbReference type="HAMAP-Rule" id="MF_00463"/>
    </source>
</evidence>
<comment type="function">
    <text evidence="1">Part of a membrane-bound complex that couples electron transfer with translocation of ions across the membrane. Required to maintain the reduced state of SoxR.</text>
</comment>
<comment type="cofactor">
    <cofactor evidence="1">
        <name>[4Fe-4S] cluster</name>
        <dbReference type="ChEBI" id="CHEBI:49883"/>
    </cofactor>
    <text evidence="1">Binds 3 [4Fe-4S] clusters.</text>
</comment>
<comment type="subunit">
    <text evidence="1">The complex is composed of six subunits: RsxA, RsxB, RsxC, RsxD, RsxE and RsxG.</text>
</comment>
<comment type="subcellular location">
    <subcellularLocation>
        <location evidence="1">Cell inner membrane</location>
    </subcellularLocation>
</comment>
<comment type="similarity">
    <text evidence="1">Belongs to the 4Fe4S bacterial-type ferredoxin family. RnfB subfamily.</text>
</comment>
<name>RSXB_SHISS</name>
<protein>
    <recommendedName>
        <fullName evidence="1">Ion-translocating oxidoreductase complex subunit B</fullName>
        <ecNumber evidence="1">7.-.-.-</ecNumber>
    </recommendedName>
    <alternativeName>
        <fullName evidence="1">Rsx electron transport complex subunit B</fullName>
    </alternativeName>
</protein>
<accession>Q3Z1Y3</accession>